<proteinExistence type="inferred from homology"/>
<reference key="1">
    <citation type="journal article" date="1995" name="Science">
        <title>Whole-genome random sequencing and assembly of Haemophilus influenzae Rd.</title>
        <authorList>
            <person name="Fleischmann R.D."/>
            <person name="Adams M.D."/>
            <person name="White O."/>
            <person name="Clayton R.A."/>
            <person name="Kirkness E.F."/>
            <person name="Kerlavage A.R."/>
            <person name="Bult C.J."/>
            <person name="Tomb J.-F."/>
            <person name="Dougherty B.A."/>
            <person name="Merrick J.M."/>
            <person name="McKenney K."/>
            <person name="Sutton G.G."/>
            <person name="FitzHugh W."/>
            <person name="Fields C.A."/>
            <person name="Gocayne J.D."/>
            <person name="Scott J.D."/>
            <person name="Shirley R."/>
            <person name="Liu L.-I."/>
            <person name="Glodek A."/>
            <person name="Kelley J.M."/>
            <person name="Weidman J.F."/>
            <person name="Phillips C.A."/>
            <person name="Spriggs T."/>
            <person name="Hedblom E."/>
            <person name="Cotton M.D."/>
            <person name="Utterback T.R."/>
            <person name="Hanna M.C."/>
            <person name="Nguyen D.T."/>
            <person name="Saudek D.M."/>
            <person name="Brandon R.C."/>
            <person name="Fine L.D."/>
            <person name="Fritchman J.L."/>
            <person name="Fuhrmann J.L."/>
            <person name="Geoghagen N.S.M."/>
            <person name="Gnehm C.L."/>
            <person name="McDonald L.A."/>
            <person name="Small K.V."/>
            <person name="Fraser C.M."/>
            <person name="Smith H.O."/>
            <person name="Venter J.C."/>
        </authorList>
    </citation>
    <scope>NUCLEOTIDE SEQUENCE [LARGE SCALE GENOMIC DNA]</scope>
    <source>
        <strain>ATCC 51907 / DSM 11121 / KW20 / Rd</strain>
    </source>
</reference>
<evidence type="ECO:0000255" key="1">
    <source>
        <dbReference type="HAMAP-Rule" id="MF_00060"/>
    </source>
</evidence>
<keyword id="KW-0963">Cytoplasm</keyword>
<keyword id="KW-0378">Hydrolase</keyword>
<keyword id="KW-0479">Metal-binding</keyword>
<keyword id="KW-0547">Nucleotide-binding</keyword>
<keyword id="KW-1185">Reference proteome</keyword>
<feature type="chain" id="PRO_0000111814" description="5'-nucleotidase SurE">
    <location>
        <begin position="1"/>
        <end position="249"/>
    </location>
</feature>
<feature type="binding site" evidence="1">
    <location>
        <position position="8"/>
    </location>
    <ligand>
        <name>a divalent metal cation</name>
        <dbReference type="ChEBI" id="CHEBI:60240"/>
    </ligand>
</feature>
<feature type="binding site" evidence="1">
    <location>
        <position position="9"/>
    </location>
    <ligand>
        <name>a divalent metal cation</name>
        <dbReference type="ChEBI" id="CHEBI:60240"/>
    </ligand>
</feature>
<feature type="binding site" evidence="1">
    <location>
        <position position="39"/>
    </location>
    <ligand>
        <name>a divalent metal cation</name>
        <dbReference type="ChEBI" id="CHEBI:60240"/>
    </ligand>
</feature>
<feature type="binding site" evidence="1">
    <location>
        <position position="91"/>
    </location>
    <ligand>
        <name>a divalent metal cation</name>
        <dbReference type="ChEBI" id="CHEBI:60240"/>
    </ligand>
</feature>
<accession>P45681</accession>
<protein>
    <recommendedName>
        <fullName evidence="1">5'-nucleotidase SurE</fullName>
        <ecNumber evidence="1">3.1.3.5</ecNumber>
    </recommendedName>
    <alternativeName>
        <fullName evidence="1">Nucleoside 5'-monophosphate phosphohydrolase</fullName>
    </alternativeName>
</protein>
<comment type="function">
    <text evidence="1">Nucleotidase that shows phosphatase activity on nucleoside 5'-monophosphates.</text>
</comment>
<comment type="catalytic activity">
    <reaction evidence="1">
        <text>a ribonucleoside 5'-phosphate + H2O = a ribonucleoside + phosphate</text>
        <dbReference type="Rhea" id="RHEA:12484"/>
        <dbReference type="ChEBI" id="CHEBI:15377"/>
        <dbReference type="ChEBI" id="CHEBI:18254"/>
        <dbReference type="ChEBI" id="CHEBI:43474"/>
        <dbReference type="ChEBI" id="CHEBI:58043"/>
        <dbReference type="EC" id="3.1.3.5"/>
    </reaction>
</comment>
<comment type="cofactor">
    <cofactor evidence="1">
        <name>a divalent metal cation</name>
        <dbReference type="ChEBI" id="CHEBI:60240"/>
    </cofactor>
    <text evidence="1">Binds 1 divalent metal cation per subunit.</text>
</comment>
<comment type="subcellular location">
    <subcellularLocation>
        <location evidence="1">Cytoplasm</location>
    </subcellularLocation>
</comment>
<comment type="similarity">
    <text evidence="1">Belongs to the SurE nucleotidase family.</text>
</comment>
<sequence length="249" mass="27340">MRILVSNDDGFHAEGIQVLATELRKIAEVIIVAPDRNRSAASSSLTLVEPLRPRHLDNGDYCVNGTPADCVHLALNGFLSGQVDLVVSGINAGCNMGDDTIYSGTLAAALEGRHLGLPAIAVSLDGRQHYETAARVVCDLIPKLQHQLLNPREIININVPDLPFEELKGYKVCRLGYRSSSVEVIKQRDPRDETIYWIGPSALPEDESEGTDFYAVKNGYVSITPIQADLTAYHSLLSLQNWLDQEFTK</sequence>
<name>SURE_HAEIN</name>
<organism>
    <name type="scientific">Haemophilus influenzae (strain ATCC 51907 / DSM 11121 / KW20 / Rd)</name>
    <dbReference type="NCBI Taxonomy" id="71421"/>
    <lineage>
        <taxon>Bacteria</taxon>
        <taxon>Pseudomonadati</taxon>
        <taxon>Pseudomonadota</taxon>
        <taxon>Gammaproteobacteria</taxon>
        <taxon>Pasteurellales</taxon>
        <taxon>Pasteurellaceae</taxon>
        <taxon>Haemophilus</taxon>
    </lineage>
</organism>
<gene>
    <name evidence="1" type="primary">surE</name>
    <name type="ordered locus">HI_0702</name>
</gene>
<dbReference type="EC" id="3.1.3.5" evidence="1"/>
<dbReference type="EMBL" id="L42023">
    <property type="protein sequence ID" value="AAC22361.1"/>
    <property type="molecule type" value="Genomic_DNA"/>
</dbReference>
<dbReference type="PIR" id="T09407">
    <property type="entry name" value="T09407"/>
</dbReference>
<dbReference type="RefSeq" id="NP_438861.1">
    <property type="nucleotide sequence ID" value="NC_000907.1"/>
</dbReference>
<dbReference type="SMR" id="P45681"/>
<dbReference type="STRING" id="71421.HI_0702"/>
<dbReference type="EnsemblBacteria" id="AAC22361">
    <property type="protein sequence ID" value="AAC22361"/>
    <property type="gene ID" value="HI_0702"/>
</dbReference>
<dbReference type="KEGG" id="hin:HI_0702"/>
<dbReference type="PATRIC" id="fig|71421.8.peg.733"/>
<dbReference type="eggNOG" id="COG0496">
    <property type="taxonomic scope" value="Bacteria"/>
</dbReference>
<dbReference type="HOGENOM" id="CLU_045192_1_2_6"/>
<dbReference type="OrthoDB" id="9780815at2"/>
<dbReference type="PhylomeDB" id="P45681"/>
<dbReference type="BioCyc" id="HINF71421:G1GJ1-736-MONOMER"/>
<dbReference type="Proteomes" id="UP000000579">
    <property type="component" value="Chromosome"/>
</dbReference>
<dbReference type="GO" id="GO:0005737">
    <property type="term" value="C:cytoplasm"/>
    <property type="evidence" value="ECO:0007669"/>
    <property type="project" value="UniProtKB-SubCell"/>
</dbReference>
<dbReference type="GO" id="GO:0008254">
    <property type="term" value="F:3'-nucleotidase activity"/>
    <property type="evidence" value="ECO:0000318"/>
    <property type="project" value="GO_Central"/>
</dbReference>
<dbReference type="GO" id="GO:0008253">
    <property type="term" value="F:5'-nucleotidase activity"/>
    <property type="evidence" value="ECO:0000318"/>
    <property type="project" value="GO_Central"/>
</dbReference>
<dbReference type="GO" id="GO:0004309">
    <property type="term" value="F:exopolyphosphatase activity"/>
    <property type="evidence" value="ECO:0000318"/>
    <property type="project" value="GO_Central"/>
</dbReference>
<dbReference type="GO" id="GO:0046872">
    <property type="term" value="F:metal ion binding"/>
    <property type="evidence" value="ECO:0007669"/>
    <property type="project" value="UniProtKB-UniRule"/>
</dbReference>
<dbReference type="GO" id="GO:0000166">
    <property type="term" value="F:nucleotide binding"/>
    <property type="evidence" value="ECO:0007669"/>
    <property type="project" value="UniProtKB-KW"/>
</dbReference>
<dbReference type="FunFam" id="3.40.1210.10:FF:000001">
    <property type="entry name" value="5'/3'-nucleotidase SurE"/>
    <property type="match status" value="1"/>
</dbReference>
<dbReference type="Gene3D" id="3.40.1210.10">
    <property type="entry name" value="Survival protein SurE-like phosphatase/nucleotidase"/>
    <property type="match status" value="1"/>
</dbReference>
<dbReference type="HAMAP" id="MF_00060">
    <property type="entry name" value="SurE"/>
    <property type="match status" value="1"/>
</dbReference>
<dbReference type="InterPro" id="IPR030048">
    <property type="entry name" value="SurE"/>
</dbReference>
<dbReference type="InterPro" id="IPR002828">
    <property type="entry name" value="SurE-like_Pase/nucleotidase"/>
</dbReference>
<dbReference type="InterPro" id="IPR036523">
    <property type="entry name" value="SurE-like_sf"/>
</dbReference>
<dbReference type="NCBIfam" id="NF001489">
    <property type="entry name" value="PRK00346.1-3"/>
    <property type="match status" value="1"/>
</dbReference>
<dbReference type="NCBIfam" id="NF001490">
    <property type="entry name" value="PRK00346.1-4"/>
    <property type="match status" value="1"/>
</dbReference>
<dbReference type="NCBIfam" id="TIGR00087">
    <property type="entry name" value="surE"/>
    <property type="match status" value="1"/>
</dbReference>
<dbReference type="PANTHER" id="PTHR30457">
    <property type="entry name" value="5'-NUCLEOTIDASE SURE"/>
    <property type="match status" value="1"/>
</dbReference>
<dbReference type="PANTHER" id="PTHR30457:SF12">
    <property type="entry name" value="5'_3'-NUCLEOTIDASE SURE"/>
    <property type="match status" value="1"/>
</dbReference>
<dbReference type="Pfam" id="PF01975">
    <property type="entry name" value="SurE"/>
    <property type="match status" value="1"/>
</dbReference>
<dbReference type="SUPFAM" id="SSF64167">
    <property type="entry name" value="SurE-like"/>
    <property type="match status" value="1"/>
</dbReference>